<reference key="1">
    <citation type="journal article" date="2002" name="Proc. Natl. Acad. Sci. U.S.A.">
        <title>Extensive mosaic structure revealed by the complete genome sequence of uropathogenic Escherichia coli.</title>
        <authorList>
            <person name="Welch R.A."/>
            <person name="Burland V."/>
            <person name="Plunkett G. III"/>
            <person name="Redford P."/>
            <person name="Roesch P."/>
            <person name="Rasko D."/>
            <person name="Buckles E.L."/>
            <person name="Liou S.-R."/>
            <person name="Boutin A."/>
            <person name="Hackett J."/>
            <person name="Stroud D."/>
            <person name="Mayhew G.F."/>
            <person name="Rose D.J."/>
            <person name="Zhou S."/>
            <person name="Schwartz D.C."/>
            <person name="Perna N.T."/>
            <person name="Mobley H.L.T."/>
            <person name="Donnenberg M.S."/>
            <person name="Blattner F.R."/>
        </authorList>
    </citation>
    <scope>NUCLEOTIDE SEQUENCE [LARGE SCALE GENOMIC DNA]</scope>
    <source>
        <strain>CFT073 / ATCC 700928 / UPEC</strain>
    </source>
</reference>
<evidence type="ECO:0000250" key="1"/>
<evidence type="ECO:0000305" key="2"/>
<name>METJ_ECOL6</name>
<keyword id="KW-0028">Amino-acid biosynthesis</keyword>
<keyword id="KW-0963">Cytoplasm</keyword>
<keyword id="KW-0238">DNA-binding</keyword>
<keyword id="KW-0486">Methionine biosynthesis</keyword>
<keyword id="KW-1185">Reference proteome</keyword>
<keyword id="KW-0678">Repressor</keyword>
<keyword id="KW-0804">Transcription</keyword>
<keyword id="KW-0805">Transcription regulation</keyword>
<protein>
    <recommendedName>
        <fullName>Met repressor</fullName>
    </recommendedName>
    <alternativeName>
        <fullName>Met regulon regulatory protein MetJ</fullName>
    </alternativeName>
</protein>
<proteinExistence type="inferred from homology"/>
<accession>P0A8U7</accession>
<accession>P08338</accession>
<comment type="function">
    <text evidence="1">This regulatory protein, when combined with SAM (S-adenosylmethionine) represses the expression of the methionine regulon and of enzymes involved in SAM synthesis.</text>
</comment>
<comment type="subunit">
    <text evidence="1">Homodimer.</text>
</comment>
<comment type="subcellular location">
    <subcellularLocation>
        <location evidence="1">Cytoplasm</location>
    </subcellularLocation>
</comment>
<comment type="domain">
    <text>Does not bind DNA by a helix-turn-helix motif.</text>
</comment>
<comment type="similarity">
    <text evidence="2">Belongs to the MetJ family.</text>
</comment>
<comment type="sequence caution" evidence="2">
    <conflict type="erroneous initiation">
        <sequence resource="EMBL-CDS" id="AAN83319"/>
    </conflict>
</comment>
<feature type="initiator methionine" description="Removed" evidence="1">
    <location>
        <position position="1"/>
    </location>
</feature>
<feature type="chain" id="PRO_0000198398" description="Met repressor">
    <location>
        <begin position="2"/>
        <end position="105"/>
    </location>
</feature>
<sequence length="105" mass="12141">MAEWSGEYISPYAEHGKKSEQVKKITVSIPLKVLKILTDERTRRQVNNLRHATNSELLCEAFLHAFTGQPLPDDADLRKERSDEIPEAAKEIMREMGINPETWEY</sequence>
<dbReference type="EMBL" id="AE014075">
    <property type="protein sequence ID" value="AAN83319.1"/>
    <property type="status" value="ALT_INIT"/>
    <property type="molecule type" value="Genomic_DNA"/>
</dbReference>
<dbReference type="RefSeq" id="WP_000852812.1">
    <property type="nucleotide sequence ID" value="NZ_CP051263.1"/>
</dbReference>
<dbReference type="SMR" id="P0A8U7"/>
<dbReference type="STRING" id="199310.c4891"/>
<dbReference type="GeneID" id="93777954"/>
<dbReference type="KEGG" id="ecc:c4891"/>
<dbReference type="eggNOG" id="COG3060">
    <property type="taxonomic scope" value="Bacteria"/>
</dbReference>
<dbReference type="HOGENOM" id="CLU_142318_0_0_6"/>
<dbReference type="Proteomes" id="UP000001410">
    <property type="component" value="Chromosome"/>
</dbReference>
<dbReference type="GO" id="GO:0005737">
    <property type="term" value="C:cytoplasm"/>
    <property type="evidence" value="ECO:0007669"/>
    <property type="project" value="UniProtKB-SubCell"/>
</dbReference>
<dbReference type="GO" id="GO:0003677">
    <property type="term" value="F:DNA binding"/>
    <property type="evidence" value="ECO:0007669"/>
    <property type="project" value="UniProtKB-KW"/>
</dbReference>
<dbReference type="GO" id="GO:0003700">
    <property type="term" value="F:DNA-binding transcription factor activity"/>
    <property type="evidence" value="ECO:0007669"/>
    <property type="project" value="InterPro"/>
</dbReference>
<dbReference type="GO" id="GO:0009086">
    <property type="term" value="P:methionine biosynthetic process"/>
    <property type="evidence" value="ECO:0007669"/>
    <property type="project" value="UniProtKB-UniRule"/>
</dbReference>
<dbReference type="GO" id="GO:0045892">
    <property type="term" value="P:negative regulation of DNA-templated transcription"/>
    <property type="evidence" value="ECO:0007669"/>
    <property type="project" value="UniProtKB-UniRule"/>
</dbReference>
<dbReference type="CDD" id="cd00490">
    <property type="entry name" value="Met_repressor_MetJ"/>
    <property type="match status" value="1"/>
</dbReference>
<dbReference type="FunFam" id="1.10.140.10:FF:000001">
    <property type="entry name" value="Met repressor"/>
    <property type="match status" value="1"/>
</dbReference>
<dbReference type="Gene3D" id="1.10.140.10">
    <property type="entry name" value="MET Apo-Repressor, subunit A"/>
    <property type="match status" value="1"/>
</dbReference>
<dbReference type="HAMAP" id="MF_00744">
    <property type="entry name" value="MetJ"/>
    <property type="match status" value="1"/>
</dbReference>
<dbReference type="InterPro" id="IPR002084">
    <property type="entry name" value="Met_repressor_MetJ"/>
</dbReference>
<dbReference type="InterPro" id="IPR023453">
    <property type="entry name" value="Met_repressor_MetJ_dom_sf"/>
</dbReference>
<dbReference type="InterPro" id="IPR010985">
    <property type="entry name" value="Ribbon_hlx_hlx"/>
</dbReference>
<dbReference type="NCBIfam" id="NF003622">
    <property type="entry name" value="PRK05264.1"/>
    <property type="match status" value="1"/>
</dbReference>
<dbReference type="Pfam" id="PF01340">
    <property type="entry name" value="MetJ"/>
    <property type="match status" value="1"/>
</dbReference>
<dbReference type="SUPFAM" id="SSF47598">
    <property type="entry name" value="Ribbon-helix-helix"/>
    <property type="match status" value="1"/>
</dbReference>
<gene>
    <name type="primary">metJ</name>
    <name type="ordered locus">c4891</name>
</gene>
<organism>
    <name type="scientific">Escherichia coli O6:H1 (strain CFT073 / ATCC 700928 / UPEC)</name>
    <dbReference type="NCBI Taxonomy" id="199310"/>
    <lineage>
        <taxon>Bacteria</taxon>
        <taxon>Pseudomonadati</taxon>
        <taxon>Pseudomonadota</taxon>
        <taxon>Gammaproteobacteria</taxon>
        <taxon>Enterobacterales</taxon>
        <taxon>Enterobacteriaceae</taxon>
        <taxon>Escherichia</taxon>
    </lineage>
</organism>